<gene>
    <name evidence="1" type="primary">thrB</name>
    <name type="ordered locus">SUN_1973</name>
</gene>
<feature type="chain" id="PRO_1000049181" description="Homoserine kinase">
    <location>
        <begin position="1"/>
        <end position="292"/>
    </location>
</feature>
<feature type="binding site" evidence="1">
    <location>
        <begin position="84"/>
        <end position="94"/>
    </location>
    <ligand>
        <name>ATP</name>
        <dbReference type="ChEBI" id="CHEBI:30616"/>
    </ligand>
</feature>
<keyword id="KW-0028">Amino-acid biosynthesis</keyword>
<keyword id="KW-0067">ATP-binding</keyword>
<keyword id="KW-0963">Cytoplasm</keyword>
<keyword id="KW-0418">Kinase</keyword>
<keyword id="KW-0547">Nucleotide-binding</keyword>
<keyword id="KW-0791">Threonine biosynthesis</keyword>
<keyword id="KW-0808">Transferase</keyword>
<accession>A6QBQ7</accession>
<organism>
    <name type="scientific">Sulfurovum sp. (strain NBC37-1)</name>
    <dbReference type="NCBI Taxonomy" id="387093"/>
    <lineage>
        <taxon>Bacteria</taxon>
        <taxon>Pseudomonadati</taxon>
        <taxon>Campylobacterota</taxon>
        <taxon>Epsilonproteobacteria</taxon>
        <taxon>Campylobacterales</taxon>
        <taxon>Sulfurovaceae</taxon>
        <taxon>Sulfurovum</taxon>
    </lineage>
</organism>
<protein>
    <recommendedName>
        <fullName evidence="1">Homoserine kinase</fullName>
        <shortName evidence="1">HK</shortName>
        <shortName evidence="1">HSK</shortName>
        <ecNumber evidence="1">2.7.1.39</ecNumber>
    </recommendedName>
</protein>
<comment type="function">
    <text evidence="1">Catalyzes the ATP-dependent phosphorylation of L-homoserine to L-homoserine phosphate.</text>
</comment>
<comment type="catalytic activity">
    <reaction evidence="1">
        <text>L-homoserine + ATP = O-phospho-L-homoserine + ADP + H(+)</text>
        <dbReference type="Rhea" id="RHEA:13985"/>
        <dbReference type="ChEBI" id="CHEBI:15378"/>
        <dbReference type="ChEBI" id="CHEBI:30616"/>
        <dbReference type="ChEBI" id="CHEBI:57476"/>
        <dbReference type="ChEBI" id="CHEBI:57590"/>
        <dbReference type="ChEBI" id="CHEBI:456216"/>
        <dbReference type="EC" id="2.7.1.39"/>
    </reaction>
</comment>
<comment type="pathway">
    <text evidence="1">Amino-acid biosynthesis; L-threonine biosynthesis; L-threonine from L-aspartate: step 4/5.</text>
</comment>
<comment type="subcellular location">
    <subcellularLocation>
        <location evidence="1">Cytoplasm</location>
    </subcellularLocation>
</comment>
<comment type="similarity">
    <text evidence="1">Belongs to the GHMP kinase family. Homoserine kinase subfamily.</text>
</comment>
<sequence length="292" mass="32629">MLISVPATSANLGPGFDTLGLAVDLRNEIVIKPSKFLSLSTHGEGADNPKIKKNSLFLSIFNENYKRLSGKANNFRFEFTNRIPISRGLGSSSAVIVAALSGAYAMAGVKYNKREILNQALRYEHHPDNITPAVMGGFNVACVEGDRVYSKKRRMPDYLRAVVVVPNRTISTARSRTVLPKMYRKEETVYSLSRAAYMTALFMSESWDLLRIASKDKLHQARRMKMMPELFDVQKLALKQGALMSTLSGSGSTFFNLAYEKDTDRIAQSLRARFPQFRVFVLALDNNGVITK</sequence>
<evidence type="ECO:0000255" key="1">
    <source>
        <dbReference type="HAMAP-Rule" id="MF_00384"/>
    </source>
</evidence>
<reference key="1">
    <citation type="journal article" date="2007" name="Proc. Natl. Acad. Sci. U.S.A.">
        <title>Deep-sea vent epsilon-proteobacterial genomes provide insights into emergence of pathogens.</title>
        <authorList>
            <person name="Nakagawa S."/>
            <person name="Takaki Y."/>
            <person name="Shimamura S."/>
            <person name="Reysenbach A.-L."/>
            <person name="Takai K."/>
            <person name="Horikoshi K."/>
        </authorList>
    </citation>
    <scope>NUCLEOTIDE SEQUENCE [LARGE SCALE GENOMIC DNA]</scope>
    <source>
        <strain>NBC37-1</strain>
    </source>
</reference>
<name>KHSE_SULNB</name>
<dbReference type="EC" id="2.7.1.39" evidence="1"/>
<dbReference type="EMBL" id="AP009179">
    <property type="protein sequence ID" value="BAF72916.1"/>
    <property type="molecule type" value="Genomic_DNA"/>
</dbReference>
<dbReference type="RefSeq" id="WP_012083736.1">
    <property type="nucleotide sequence ID" value="NC_009663.1"/>
</dbReference>
<dbReference type="SMR" id="A6QBQ7"/>
<dbReference type="STRING" id="387093.SUN_1973"/>
<dbReference type="KEGG" id="sun:SUN_1973"/>
<dbReference type="eggNOG" id="COG0083">
    <property type="taxonomic scope" value="Bacteria"/>
</dbReference>
<dbReference type="HOGENOM" id="CLU_041243_0_0_7"/>
<dbReference type="OrthoDB" id="9769912at2"/>
<dbReference type="UniPathway" id="UPA00050">
    <property type="reaction ID" value="UER00064"/>
</dbReference>
<dbReference type="Proteomes" id="UP000006378">
    <property type="component" value="Chromosome"/>
</dbReference>
<dbReference type="GO" id="GO:0005737">
    <property type="term" value="C:cytoplasm"/>
    <property type="evidence" value="ECO:0007669"/>
    <property type="project" value="UniProtKB-SubCell"/>
</dbReference>
<dbReference type="GO" id="GO:0005524">
    <property type="term" value="F:ATP binding"/>
    <property type="evidence" value="ECO:0007669"/>
    <property type="project" value="UniProtKB-UniRule"/>
</dbReference>
<dbReference type="GO" id="GO:0004413">
    <property type="term" value="F:homoserine kinase activity"/>
    <property type="evidence" value="ECO:0007669"/>
    <property type="project" value="UniProtKB-UniRule"/>
</dbReference>
<dbReference type="GO" id="GO:0009088">
    <property type="term" value="P:threonine biosynthetic process"/>
    <property type="evidence" value="ECO:0007669"/>
    <property type="project" value="UniProtKB-UniRule"/>
</dbReference>
<dbReference type="Gene3D" id="3.30.230.10">
    <property type="match status" value="1"/>
</dbReference>
<dbReference type="Gene3D" id="3.30.70.890">
    <property type="entry name" value="GHMP kinase, C-terminal domain"/>
    <property type="match status" value="1"/>
</dbReference>
<dbReference type="HAMAP" id="MF_00384">
    <property type="entry name" value="Homoser_kinase"/>
    <property type="match status" value="1"/>
</dbReference>
<dbReference type="InterPro" id="IPR013750">
    <property type="entry name" value="GHMP_kinase_C_dom"/>
</dbReference>
<dbReference type="InterPro" id="IPR036554">
    <property type="entry name" value="GHMP_kinase_C_sf"/>
</dbReference>
<dbReference type="InterPro" id="IPR006204">
    <property type="entry name" value="GHMP_kinase_N_dom"/>
</dbReference>
<dbReference type="InterPro" id="IPR006203">
    <property type="entry name" value="GHMP_knse_ATP-bd_CS"/>
</dbReference>
<dbReference type="InterPro" id="IPR000870">
    <property type="entry name" value="Homoserine_kinase"/>
</dbReference>
<dbReference type="InterPro" id="IPR020568">
    <property type="entry name" value="Ribosomal_Su5_D2-typ_SF"/>
</dbReference>
<dbReference type="InterPro" id="IPR014721">
    <property type="entry name" value="Ribsml_uS5_D2-typ_fold_subgr"/>
</dbReference>
<dbReference type="NCBIfam" id="TIGR00191">
    <property type="entry name" value="thrB"/>
    <property type="match status" value="1"/>
</dbReference>
<dbReference type="PANTHER" id="PTHR20861:SF1">
    <property type="entry name" value="HOMOSERINE KINASE"/>
    <property type="match status" value="1"/>
</dbReference>
<dbReference type="PANTHER" id="PTHR20861">
    <property type="entry name" value="HOMOSERINE/4-DIPHOSPHOCYTIDYL-2-C-METHYL-D-ERYTHRITOL KINASE"/>
    <property type="match status" value="1"/>
</dbReference>
<dbReference type="Pfam" id="PF08544">
    <property type="entry name" value="GHMP_kinases_C"/>
    <property type="match status" value="1"/>
</dbReference>
<dbReference type="Pfam" id="PF00288">
    <property type="entry name" value="GHMP_kinases_N"/>
    <property type="match status" value="1"/>
</dbReference>
<dbReference type="PIRSF" id="PIRSF000676">
    <property type="entry name" value="Homoser_kin"/>
    <property type="match status" value="1"/>
</dbReference>
<dbReference type="PRINTS" id="PR00958">
    <property type="entry name" value="HOMSERKINASE"/>
</dbReference>
<dbReference type="SUPFAM" id="SSF55060">
    <property type="entry name" value="GHMP Kinase, C-terminal domain"/>
    <property type="match status" value="1"/>
</dbReference>
<dbReference type="SUPFAM" id="SSF54211">
    <property type="entry name" value="Ribosomal protein S5 domain 2-like"/>
    <property type="match status" value="1"/>
</dbReference>
<dbReference type="PROSITE" id="PS00627">
    <property type="entry name" value="GHMP_KINASES_ATP"/>
    <property type="match status" value="1"/>
</dbReference>
<proteinExistence type="inferred from homology"/>